<sequence>MKKFRWVVLVVVVLACLLLWAQVFNMMCDQDVQFFSGICAINQFIPW</sequence>
<proteinExistence type="inferred from homology"/>
<accession>P64514</accession>
<accession>P76267</accession>
<feature type="chain" id="PRO_0000169068" description="PhoP/PhoQ regulator MgrB">
    <location>
        <begin position="1"/>
        <end position="47"/>
    </location>
</feature>
<feature type="transmembrane region" description="Helical" evidence="1">
    <location>
        <begin position="6"/>
        <end position="26"/>
    </location>
</feature>
<organism>
    <name type="scientific">Shigella flexneri</name>
    <dbReference type="NCBI Taxonomy" id="623"/>
    <lineage>
        <taxon>Bacteria</taxon>
        <taxon>Pseudomonadati</taxon>
        <taxon>Pseudomonadota</taxon>
        <taxon>Gammaproteobacteria</taxon>
        <taxon>Enterobacterales</taxon>
        <taxon>Enterobacteriaceae</taxon>
        <taxon>Shigella</taxon>
    </lineage>
</organism>
<dbReference type="EMBL" id="AE005674">
    <property type="protein sequence ID" value="AAN43001.1"/>
    <property type="molecule type" value="Genomic_DNA"/>
</dbReference>
<dbReference type="EMBL" id="AE014073">
    <property type="protein sequence ID" value="AAP16896.1"/>
    <property type="molecule type" value="Genomic_DNA"/>
</dbReference>
<dbReference type="RefSeq" id="NP_707294.1">
    <property type="nucleotide sequence ID" value="NC_004337.2"/>
</dbReference>
<dbReference type="RefSeq" id="WP_000714550.1">
    <property type="nucleotide sequence ID" value="NZ_WPGW01000080.1"/>
</dbReference>
<dbReference type="SMR" id="P64514"/>
<dbReference type="STRING" id="198214.SF1400"/>
<dbReference type="PaxDb" id="198214-SF1400"/>
<dbReference type="GeneID" id="1024614"/>
<dbReference type="GeneID" id="93776075"/>
<dbReference type="KEGG" id="sfl:SF1400"/>
<dbReference type="KEGG" id="sfx:S1515"/>
<dbReference type="PATRIC" id="fig|198214.7.peg.1650"/>
<dbReference type="HOGENOM" id="CLU_208030_1_0_6"/>
<dbReference type="Proteomes" id="UP000001006">
    <property type="component" value="Chromosome"/>
</dbReference>
<dbReference type="Proteomes" id="UP000002673">
    <property type="component" value="Chromosome"/>
</dbReference>
<dbReference type="GO" id="GO:0005886">
    <property type="term" value="C:plasma membrane"/>
    <property type="evidence" value="ECO:0007669"/>
    <property type="project" value="UniProtKB-SubCell"/>
</dbReference>
<dbReference type="GO" id="GO:0070298">
    <property type="term" value="P:negative regulation of phosphorelay signal transduction system"/>
    <property type="evidence" value="ECO:0007669"/>
    <property type="project" value="UniProtKB-UniRule"/>
</dbReference>
<dbReference type="HAMAP" id="MF_01596">
    <property type="entry name" value="MgrB"/>
    <property type="match status" value="1"/>
</dbReference>
<dbReference type="InterPro" id="IPR020907">
    <property type="entry name" value="MgrB"/>
</dbReference>
<dbReference type="NCBIfam" id="NF007635">
    <property type="entry name" value="PRK10299.1"/>
    <property type="match status" value="1"/>
</dbReference>
<dbReference type="Pfam" id="PF13998">
    <property type="entry name" value="MgrB"/>
    <property type="match status" value="1"/>
</dbReference>
<dbReference type="PROSITE" id="PS51257">
    <property type="entry name" value="PROKAR_LIPOPROTEIN"/>
    <property type="match status" value="1"/>
</dbReference>
<reference key="1">
    <citation type="journal article" date="2002" name="Nucleic Acids Res.">
        <title>Genome sequence of Shigella flexneri 2a: insights into pathogenicity through comparison with genomes of Escherichia coli K12 and O157.</title>
        <authorList>
            <person name="Jin Q."/>
            <person name="Yuan Z."/>
            <person name="Xu J."/>
            <person name="Wang Y."/>
            <person name="Shen Y."/>
            <person name="Lu W."/>
            <person name="Wang J."/>
            <person name="Liu H."/>
            <person name="Yang J."/>
            <person name="Yang F."/>
            <person name="Zhang X."/>
            <person name="Zhang J."/>
            <person name="Yang G."/>
            <person name="Wu H."/>
            <person name="Qu D."/>
            <person name="Dong J."/>
            <person name="Sun L."/>
            <person name="Xue Y."/>
            <person name="Zhao A."/>
            <person name="Gao Y."/>
            <person name="Zhu J."/>
            <person name="Kan B."/>
            <person name="Ding K."/>
            <person name="Chen S."/>
            <person name="Cheng H."/>
            <person name="Yao Z."/>
            <person name="He B."/>
            <person name="Chen R."/>
            <person name="Ma D."/>
            <person name="Qiang B."/>
            <person name="Wen Y."/>
            <person name="Hou Y."/>
            <person name="Yu J."/>
        </authorList>
    </citation>
    <scope>NUCLEOTIDE SEQUENCE [LARGE SCALE GENOMIC DNA]</scope>
    <source>
        <strain>301 / Serotype 2a</strain>
    </source>
</reference>
<reference key="2">
    <citation type="journal article" date="2003" name="Infect. Immun.">
        <title>Complete genome sequence and comparative genomics of Shigella flexneri serotype 2a strain 2457T.</title>
        <authorList>
            <person name="Wei J."/>
            <person name="Goldberg M.B."/>
            <person name="Burland V."/>
            <person name="Venkatesan M.M."/>
            <person name="Deng W."/>
            <person name="Fournier G."/>
            <person name="Mayhew G.F."/>
            <person name="Plunkett G. III"/>
            <person name="Rose D.J."/>
            <person name="Darling A."/>
            <person name="Mau B."/>
            <person name="Perna N.T."/>
            <person name="Payne S.M."/>
            <person name="Runyen-Janecky L.J."/>
            <person name="Zhou S."/>
            <person name="Schwartz D.C."/>
            <person name="Blattner F.R."/>
        </authorList>
    </citation>
    <scope>NUCLEOTIDE SEQUENCE [LARGE SCALE GENOMIC DNA]</scope>
    <source>
        <strain>ATCC 700930 / 2457T / Serotype 2a</strain>
    </source>
</reference>
<comment type="function">
    <text evidence="1">PhoP-regulated transcription is redox-sensitive, being activated when the periplasm becomes more reducing. MgrB acts between DsbA/DsbB and PhoP/PhoQ in this pathway. Represses PhoP/PhoQ signaling, possibly by binding to the periplasmic domain of PhoQ, altering its activity and that of downstream effector PhoP.</text>
</comment>
<comment type="subunit">
    <text evidence="1">May form homooligomers. Probably interacts with the periplasmic domain of PhoQ.</text>
</comment>
<comment type="subcellular location">
    <subcellularLocation>
        <location evidence="1">Cell inner membrane</location>
        <topology evidence="1">Single-pass membrane protein</topology>
    </subcellularLocation>
</comment>
<comment type="similarity">
    <text evidence="1">Belongs to the MgrB family.</text>
</comment>
<evidence type="ECO:0000255" key="1">
    <source>
        <dbReference type="HAMAP-Rule" id="MF_01596"/>
    </source>
</evidence>
<protein>
    <recommendedName>
        <fullName evidence="1">PhoP/PhoQ regulator MgrB</fullName>
    </recommendedName>
</protein>
<keyword id="KW-0997">Cell inner membrane</keyword>
<keyword id="KW-1003">Cell membrane</keyword>
<keyword id="KW-0472">Membrane</keyword>
<keyword id="KW-1185">Reference proteome</keyword>
<keyword id="KW-0812">Transmembrane</keyword>
<keyword id="KW-1133">Transmembrane helix</keyword>
<gene>
    <name evidence="1" type="primary">mgrB</name>
    <name type="ordered locus">SF1400</name>
    <name type="ordered locus">S1515</name>
</gene>
<name>MGRB_SHIFL</name>